<keyword id="KW-0028">Amino-acid biosynthesis</keyword>
<keyword id="KW-0963">Cytoplasm</keyword>
<keyword id="KW-0368">Histidine biosynthesis</keyword>
<keyword id="KW-1185">Reference proteome</keyword>
<dbReference type="EMBL" id="BX640417">
    <property type="protein sequence ID" value="CAE42467.1"/>
    <property type="molecule type" value="Genomic_DNA"/>
</dbReference>
<dbReference type="RefSeq" id="NP_880837.1">
    <property type="nucleotide sequence ID" value="NC_002929.2"/>
</dbReference>
<dbReference type="RefSeq" id="WP_010930786.1">
    <property type="nucleotide sequence ID" value="NZ_CP039022.1"/>
</dbReference>
<dbReference type="SMR" id="Q7VWM0"/>
<dbReference type="STRING" id="257313.BP2189"/>
<dbReference type="PaxDb" id="257313-BP2189"/>
<dbReference type="KEGG" id="bpe:BP2189"/>
<dbReference type="PATRIC" id="fig|257313.5.peg.2363"/>
<dbReference type="eggNOG" id="COG3705">
    <property type="taxonomic scope" value="Bacteria"/>
</dbReference>
<dbReference type="HOGENOM" id="CLU_025113_0_1_4"/>
<dbReference type="UniPathway" id="UPA00031">
    <property type="reaction ID" value="UER00006"/>
</dbReference>
<dbReference type="Proteomes" id="UP000002676">
    <property type="component" value="Chromosome"/>
</dbReference>
<dbReference type="GO" id="GO:0005737">
    <property type="term" value="C:cytoplasm"/>
    <property type="evidence" value="ECO:0007669"/>
    <property type="project" value="UniProtKB-SubCell"/>
</dbReference>
<dbReference type="GO" id="GO:0004821">
    <property type="term" value="F:histidine-tRNA ligase activity"/>
    <property type="evidence" value="ECO:0007669"/>
    <property type="project" value="TreeGrafter"/>
</dbReference>
<dbReference type="GO" id="GO:0006427">
    <property type="term" value="P:histidyl-tRNA aminoacylation"/>
    <property type="evidence" value="ECO:0007669"/>
    <property type="project" value="TreeGrafter"/>
</dbReference>
<dbReference type="GO" id="GO:0000105">
    <property type="term" value="P:L-histidine biosynthetic process"/>
    <property type="evidence" value="ECO:0007669"/>
    <property type="project" value="UniProtKB-UniRule"/>
</dbReference>
<dbReference type="Gene3D" id="3.30.930.10">
    <property type="entry name" value="Bira Bifunctional Protein, Domain 2"/>
    <property type="match status" value="1"/>
</dbReference>
<dbReference type="HAMAP" id="MF_00125">
    <property type="entry name" value="HisZ"/>
    <property type="match status" value="1"/>
</dbReference>
<dbReference type="InterPro" id="IPR045864">
    <property type="entry name" value="aa-tRNA-synth_II/BPL/LPL"/>
</dbReference>
<dbReference type="InterPro" id="IPR041715">
    <property type="entry name" value="HisRS-like_core"/>
</dbReference>
<dbReference type="InterPro" id="IPR004516">
    <property type="entry name" value="HisRS/HisZ"/>
</dbReference>
<dbReference type="InterPro" id="IPR004517">
    <property type="entry name" value="HisZ"/>
</dbReference>
<dbReference type="NCBIfam" id="NF008935">
    <property type="entry name" value="PRK12292.1-1"/>
    <property type="match status" value="1"/>
</dbReference>
<dbReference type="NCBIfam" id="NF009086">
    <property type="entry name" value="PRK12421.1"/>
    <property type="match status" value="1"/>
</dbReference>
<dbReference type="PANTHER" id="PTHR43707:SF1">
    <property type="entry name" value="HISTIDINE--TRNA LIGASE, MITOCHONDRIAL-RELATED"/>
    <property type="match status" value="1"/>
</dbReference>
<dbReference type="PANTHER" id="PTHR43707">
    <property type="entry name" value="HISTIDYL-TRNA SYNTHETASE"/>
    <property type="match status" value="1"/>
</dbReference>
<dbReference type="Pfam" id="PF13393">
    <property type="entry name" value="tRNA-synt_His"/>
    <property type="match status" value="1"/>
</dbReference>
<dbReference type="PIRSF" id="PIRSF001549">
    <property type="entry name" value="His-tRNA_synth"/>
    <property type="match status" value="1"/>
</dbReference>
<dbReference type="SUPFAM" id="SSF55681">
    <property type="entry name" value="Class II aaRS and biotin synthetases"/>
    <property type="match status" value="1"/>
</dbReference>
<accession>Q7VWM0</accession>
<name>HISZ_BORPE</name>
<sequence length="385" mass="41627">MGNWLLPEGLADVLPAEARRIEELRRELLDLYRTYGFELVAPPLVEYIDSLLSSTGSDLNLRTCKLVDQLSGRTLGVRADMTSQVTRIDAHLLNRAGVTRLCYCGSVLHARPADLLSSRELLQIGAEIYGHAGFEADLEIIQLVMDTLATAGVRNARLDLCHSGVMRAIFDADPQASRHAGDLCTLLREKDVPGLAELASRVDGLGEDTVRALQALATLYGGPEIIARARRELPAVPGMAQALDALQALVDAMPGVTLSVDLADVGGYGYHSGVTFAVYGEDWHDALVRGGRYDDVSCAFGRARPATGFSLDLRKLAAGLTPAEPARAVRAPWGQDPALTDAVRRLRRSGEIVVQVLPGHEQGLDEFVCDRELALQDGAWTVRTL</sequence>
<protein>
    <recommendedName>
        <fullName evidence="1">ATP phosphoribosyltransferase regulatory subunit</fullName>
    </recommendedName>
</protein>
<feature type="chain" id="PRO_0000171029" description="ATP phosphoribosyltransferase regulatory subunit">
    <location>
        <begin position="1"/>
        <end position="385"/>
    </location>
</feature>
<comment type="function">
    <text evidence="1">Required for the first step of histidine biosynthesis. May allow the feedback regulation of ATP phosphoribosyltransferase activity by histidine.</text>
</comment>
<comment type="pathway">
    <text evidence="1">Amino-acid biosynthesis; L-histidine biosynthesis; L-histidine from 5-phospho-alpha-D-ribose 1-diphosphate: step 1/9.</text>
</comment>
<comment type="subunit">
    <text evidence="1">Heteromultimer composed of HisG and HisZ subunits.</text>
</comment>
<comment type="subcellular location">
    <subcellularLocation>
        <location evidence="1">Cytoplasm</location>
    </subcellularLocation>
</comment>
<comment type="miscellaneous">
    <text>This function is generally fulfilled by the C-terminal part of HisG, which is missing in some bacteria such as this one.</text>
</comment>
<comment type="similarity">
    <text evidence="1">Belongs to the class-II aminoacyl-tRNA synthetase family. HisZ subfamily.</text>
</comment>
<gene>
    <name evidence="1" type="primary">hisZ</name>
    <name type="ordered locus">BP2189</name>
</gene>
<reference key="1">
    <citation type="journal article" date="2003" name="Nat. Genet.">
        <title>Comparative analysis of the genome sequences of Bordetella pertussis, Bordetella parapertussis and Bordetella bronchiseptica.</title>
        <authorList>
            <person name="Parkhill J."/>
            <person name="Sebaihia M."/>
            <person name="Preston A."/>
            <person name="Murphy L.D."/>
            <person name="Thomson N.R."/>
            <person name="Harris D.E."/>
            <person name="Holden M.T.G."/>
            <person name="Churcher C.M."/>
            <person name="Bentley S.D."/>
            <person name="Mungall K.L."/>
            <person name="Cerdeno-Tarraga A.-M."/>
            <person name="Temple L."/>
            <person name="James K.D."/>
            <person name="Harris B."/>
            <person name="Quail M.A."/>
            <person name="Achtman M."/>
            <person name="Atkin R."/>
            <person name="Baker S."/>
            <person name="Basham D."/>
            <person name="Bason N."/>
            <person name="Cherevach I."/>
            <person name="Chillingworth T."/>
            <person name="Collins M."/>
            <person name="Cronin A."/>
            <person name="Davis P."/>
            <person name="Doggett J."/>
            <person name="Feltwell T."/>
            <person name="Goble A."/>
            <person name="Hamlin N."/>
            <person name="Hauser H."/>
            <person name="Holroyd S."/>
            <person name="Jagels K."/>
            <person name="Leather S."/>
            <person name="Moule S."/>
            <person name="Norberczak H."/>
            <person name="O'Neil S."/>
            <person name="Ormond D."/>
            <person name="Price C."/>
            <person name="Rabbinowitsch E."/>
            <person name="Rutter S."/>
            <person name="Sanders M."/>
            <person name="Saunders D."/>
            <person name="Seeger K."/>
            <person name="Sharp S."/>
            <person name="Simmonds M."/>
            <person name="Skelton J."/>
            <person name="Squares R."/>
            <person name="Squares S."/>
            <person name="Stevens K."/>
            <person name="Unwin L."/>
            <person name="Whitehead S."/>
            <person name="Barrell B.G."/>
            <person name="Maskell D.J."/>
        </authorList>
    </citation>
    <scope>NUCLEOTIDE SEQUENCE [LARGE SCALE GENOMIC DNA]</scope>
    <source>
        <strain>Tohama I / ATCC BAA-589 / NCTC 13251</strain>
    </source>
</reference>
<proteinExistence type="inferred from homology"/>
<evidence type="ECO:0000255" key="1">
    <source>
        <dbReference type="HAMAP-Rule" id="MF_00125"/>
    </source>
</evidence>
<organism>
    <name type="scientific">Bordetella pertussis (strain Tohama I / ATCC BAA-589 / NCTC 13251)</name>
    <dbReference type="NCBI Taxonomy" id="257313"/>
    <lineage>
        <taxon>Bacteria</taxon>
        <taxon>Pseudomonadati</taxon>
        <taxon>Pseudomonadota</taxon>
        <taxon>Betaproteobacteria</taxon>
        <taxon>Burkholderiales</taxon>
        <taxon>Alcaligenaceae</taxon>
        <taxon>Bordetella</taxon>
    </lineage>
</organism>